<reference key="1">
    <citation type="journal article" date="2010" name="J. Bacteriol.">
        <title>Genome sequence of the dioxin-mineralizing bacterium Sphingomonas wittichii RW1.</title>
        <authorList>
            <person name="Miller T.R."/>
            <person name="Delcher A.L."/>
            <person name="Salzberg S.L."/>
            <person name="Saunders E."/>
            <person name="Detter J.C."/>
            <person name="Halden R.U."/>
        </authorList>
    </citation>
    <scope>NUCLEOTIDE SEQUENCE [LARGE SCALE GENOMIC DNA]</scope>
    <source>
        <strain>DSM 6014 / CCUG 31198 / JCM 15750 / NBRC 105917 / EY 4224 / RW1</strain>
    </source>
</reference>
<keyword id="KW-0058">Aromatic hydrocarbons catabolism</keyword>
<keyword id="KW-0520">NAD</keyword>
<keyword id="KW-0560">Oxidoreductase</keyword>
<keyword id="KW-0614">Plasmid</keyword>
<keyword id="KW-1185">Reference proteome</keyword>
<name>ACDH3_RHIWR</name>
<gene>
    <name type="ordered locus">Swit_4924</name>
</gene>
<proteinExistence type="inferred from homology"/>
<organism>
    <name type="scientific">Rhizorhabdus wittichii (strain DSM 6014 / CCUG 31198 / JCM 15750 / NBRC 105917 / EY 4224 / RW1)</name>
    <name type="common">Sphingomonas wittichii</name>
    <dbReference type="NCBI Taxonomy" id="392499"/>
    <lineage>
        <taxon>Bacteria</taxon>
        <taxon>Pseudomonadati</taxon>
        <taxon>Pseudomonadota</taxon>
        <taxon>Alphaproteobacteria</taxon>
        <taxon>Sphingomonadales</taxon>
        <taxon>Sphingomonadaceae</taxon>
        <taxon>Rhizorhabdus</taxon>
    </lineage>
</organism>
<sequence>MGKKKVAIIGSGNIGTDLMIKVMRLSEVLEMGVMVGIDPASDGLARAARMGVATTHKGIDGLLAMPEFADVEIVFDATSAGAHKRNSELVLAAGKRMIDLTPAAIGPYVIPPVNGDKCLDALNVNMVTCGGQATIPIVAAVNRVAKVHYGEIIASIASKSAGPGTRANIDEFTETTSQAIMDVGGATRGKAIIILNPAEPPLIMRDTVYCLCEDADQEAIRQSIHDMVAEVQSYVPGYRLKQAVQFEHIGSNRPLQIPEMDGEYTGLKVSVFLEVEGAAHYLPSYAGNLDIMTSAAMKTAEKIAARMHEGATT</sequence>
<geneLocation type="plasmid">
    <name>pSWIT02</name>
</geneLocation>
<accession>A5VGU5</accession>
<comment type="catalytic activity">
    <reaction evidence="1">
        <text>acetaldehyde + NAD(+) + CoA = acetyl-CoA + NADH + H(+)</text>
        <dbReference type="Rhea" id="RHEA:23288"/>
        <dbReference type="ChEBI" id="CHEBI:15343"/>
        <dbReference type="ChEBI" id="CHEBI:15378"/>
        <dbReference type="ChEBI" id="CHEBI:57287"/>
        <dbReference type="ChEBI" id="CHEBI:57288"/>
        <dbReference type="ChEBI" id="CHEBI:57540"/>
        <dbReference type="ChEBI" id="CHEBI:57945"/>
        <dbReference type="EC" id="1.2.1.10"/>
    </reaction>
</comment>
<comment type="similarity">
    <text evidence="1">Belongs to the acetaldehyde dehydrogenase family.</text>
</comment>
<protein>
    <recommendedName>
        <fullName evidence="1">Acetaldehyde dehydrogenase 3</fullName>
        <ecNumber evidence="1">1.2.1.10</ecNumber>
    </recommendedName>
    <alternativeName>
        <fullName evidence="1">Acetaldehyde dehydrogenase [acetylating] 3</fullName>
    </alternativeName>
</protein>
<dbReference type="EC" id="1.2.1.10" evidence="1"/>
<dbReference type="EMBL" id="CP000701">
    <property type="protein sequence ID" value="ABQ71544.1"/>
    <property type="molecule type" value="Genomic_DNA"/>
</dbReference>
<dbReference type="SMR" id="A5VGU5"/>
<dbReference type="KEGG" id="swi:Swit_4924"/>
<dbReference type="HOGENOM" id="CLU_062208_0_0_5"/>
<dbReference type="OrthoDB" id="9786743at2"/>
<dbReference type="Proteomes" id="UP000001989">
    <property type="component" value="Plasmid pSWIT02"/>
</dbReference>
<dbReference type="GO" id="GO:0008774">
    <property type="term" value="F:acetaldehyde dehydrogenase (acetylating) activity"/>
    <property type="evidence" value="ECO:0007669"/>
    <property type="project" value="UniProtKB-UniRule"/>
</dbReference>
<dbReference type="GO" id="GO:0051287">
    <property type="term" value="F:NAD binding"/>
    <property type="evidence" value="ECO:0007669"/>
    <property type="project" value="UniProtKB-UniRule"/>
</dbReference>
<dbReference type="GO" id="GO:0009056">
    <property type="term" value="P:catabolic process"/>
    <property type="evidence" value="ECO:0007669"/>
    <property type="project" value="UniProtKB-KW"/>
</dbReference>
<dbReference type="CDD" id="cd23933">
    <property type="entry name" value="ALDH_C"/>
    <property type="match status" value="1"/>
</dbReference>
<dbReference type="Gene3D" id="3.30.360.10">
    <property type="entry name" value="Dihydrodipicolinate Reductase, domain 2"/>
    <property type="match status" value="1"/>
</dbReference>
<dbReference type="Gene3D" id="3.40.50.720">
    <property type="entry name" value="NAD(P)-binding Rossmann-like Domain"/>
    <property type="match status" value="1"/>
</dbReference>
<dbReference type="HAMAP" id="MF_01657">
    <property type="entry name" value="Ac_ald_DH_ac"/>
    <property type="match status" value="1"/>
</dbReference>
<dbReference type="InterPro" id="IPR003361">
    <property type="entry name" value="Acetaldehyde_dehydrogenase"/>
</dbReference>
<dbReference type="InterPro" id="IPR015426">
    <property type="entry name" value="Acetylaldehyde_DH_C"/>
</dbReference>
<dbReference type="InterPro" id="IPR036291">
    <property type="entry name" value="NAD(P)-bd_dom_sf"/>
</dbReference>
<dbReference type="InterPro" id="IPR000534">
    <property type="entry name" value="Semialdehyde_DH_NAD-bd"/>
</dbReference>
<dbReference type="NCBIfam" id="TIGR03215">
    <property type="entry name" value="ac_ald_DH_ac"/>
    <property type="match status" value="1"/>
</dbReference>
<dbReference type="NCBIfam" id="NF006157">
    <property type="entry name" value="PRK08300.1"/>
    <property type="match status" value="1"/>
</dbReference>
<dbReference type="Pfam" id="PF09290">
    <property type="entry name" value="AcetDehyd-dimer"/>
    <property type="match status" value="1"/>
</dbReference>
<dbReference type="Pfam" id="PF01118">
    <property type="entry name" value="Semialdhyde_dh"/>
    <property type="match status" value="1"/>
</dbReference>
<dbReference type="PIRSF" id="PIRSF015689">
    <property type="entry name" value="Actaldh_dh_actl"/>
    <property type="match status" value="1"/>
</dbReference>
<dbReference type="SMART" id="SM00859">
    <property type="entry name" value="Semialdhyde_dh"/>
    <property type="match status" value="1"/>
</dbReference>
<dbReference type="SUPFAM" id="SSF55347">
    <property type="entry name" value="Glyceraldehyde-3-phosphate dehydrogenase-like, C-terminal domain"/>
    <property type="match status" value="1"/>
</dbReference>
<dbReference type="SUPFAM" id="SSF51735">
    <property type="entry name" value="NAD(P)-binding Rossmann-fold domains"/>
    <property type="match status" value="1"/>
</dbReference>
<feature type="chain" id="PRO_0000387744" description="Acetaldehyde dehydrogenase 3">
    <location>
        <begin position="1"/>
        <end position="313"/>
    </location>
</feature>
<feature type="active site" description="Acyl-thioester intermediate" evidence="1">
    <location>
        <position position="129"/>
    </location>
</feature>
<feature type="binding site" evidence="1">
    <location>
        <begin position="11"/>
        <end position="14"/>
    </location>
    <ligand>
        <name>NAD(+)</name>
        <dbReference type="ChEBI" id="CHEBI:57540"/>
    </ligand>
</feature>
<feature type="binding site" evidence="1">
    <location>
        <begin position="160"/>
        <end position="168"/>
    </location>
    <ligand>
        <name>NAD(+)</name>
        <dbReference type="ChEBI" id="CHEBI:57540"/>
    </ligand>
</feature>
<feature type="binding site" evidence="1">
    <location>
        <position position="288"/>
    </location>
    <ligand>
        <name>NAD(+)</name>
        <dbReference type="ChEBI" id="CHEBI:57540"/>
    </ligand>
</feature>
<evidence type="ECO:0000255" key="1">
    <source>
        <dbReference type="HAMAP-Rule" id="MF_01657"/>
    </source>
</evidence>